<comment type="function">
    <text evidence="1">Dimethylates a single guanine residue at position 26 of a number of tRNAs using S-adenosyl-L-methionine as donor of the methyl groups.</text>
</comment>
<comment type="catalytic activity">
    <reaction evidence="1">
        <text>guanosine(26) in tRNA + 2 S-adenosyl-L-methionine = N(2)-dimethylguanosine(26) in tRNA + 2 S-adenosyl-L-homocysteine + 2 H(+)</text>
        <dbReference type="Rhea" id="RHEA:43140"/>
        <dbReference type="Rhea" id="RHEA-COMP:10359"/>
        <dbReference type="Rhea" id="RHEA-COMP:10360"/>
        <dbReference type="ChEBI" id="CHEBI:15378"/>
        <dbReference type="ChEBI" id="CHEBI:57856"/>
        <dbReference type="ChEBI" id="CHEBI:59789"/>
        <dbReference type="ChEBI" id="CHEBI:74269"/>
        <dbReference type="ChEBI" id="CHEBI:74513"/>
        <dbReference type="EC" id="2.1.1.216"/>
    </reaction>
</comment>
<comment type="similarity">
    <text evidence="1">Belongs to the class I-like SAM-binding methyltransferase superfamily. Trm1 family.</text>
</comment>
<name>TRM1_SACI3</name>
<organism>
    <name type="scientific">Saccharolobus islandicus (strain M.16.27)</name>
    <name type="common">Sulfolobus islandicus</name>
    <dbReference type="NCBI Taxonomy" id="427318"/>
    <lineage>
        <taxon>Archaea</taxon>
        <taxon>Thermoproteota</taxon>
        <taxon>Thermoprotei</taxon>
        <taxon>Sulfolobales</taxon>
        <taxon>Sulfolobaceae</taxon>
        <taxon>Saccharolobus</taxon>
    </lineage>
</organism>
<dbReference type="EC" id="2.1.1.216" evidence="1"/>
<dbReference type="EMBL" id="CP001401">
    <property type="protein sequence ID" value="ACP55216.1"/>
    <property type="molecule type" value="Genomic_DNA"/>
</dbReference>
<dbReference type="RefSeq" id="WP_012718799.1">
    <property type="nucleotide sequence ID" value="NC_012632.1"/>
</dbReference>
<dbReference type="SMR" id="C3N5E1"/>
<dbReference type="KEGG" id="sim:M1627_1333"/>
<dbReference type="HOGENOM" id="CLU_010862_5_1_2"/>
<dbReference type="Proteomes" id="UP000002307">
    <property type="component" value="Chromosome"/>
</dbReference>
<dbReference type="GO" id="GO:0160104">
    <property type="term" value="F:tRNA (guanine(26)-N2)-dimethyltransferase activity"/>
    <property type="evidence" value="ECO:0007669"/>
    <property type="project" value="UniProtKB-UniRule"/>
</dbReference>
<dbReference type="GO" id="GO:0000049">
    <property type="term" value="F:tRNA binding"/>
    <property type="evidence" value="ECO:0007669"/>
    <property type="project" value="UniProtKB-KW"/>
</dbReference>
<dbReference type="GO" id="GO:0002940">
    <property type="term" value="P:tRNA N2-guanine methylation"/>
    <property type="evidence" value="ECO:0007669"/>
    <property type="project" value="TreeGrafter"/>
</dbReference>
<dbReference type="FunFam" id="3.40.50.150:FF:000272">
    <property type="entry name" value="tRNA (guanine(26)-N(2))-dimethyltransferase"/>
    <property type="match status" value="1"/>
</dbReference>
<dbReference type="Gene3D" id="3.30.56.70">
    <property type="entry name" value="N2,N2-dimethylguanosine tRNA methyltransferase, C-terminal domain"/>
    <property type="match status" value="1"/>
</dbReference>
<dbReference type="Gene3D" id="3.40.50.150">
    <property type="entry name" value="Vaccinia Virus protein VP39"/>
    <property type="match status" value="1"/>
</dbReference>
<dbReference type="HAMAP" id="MF_00290">
    <property type="entry name" value="tRNA_dimethyltr_TRM1"/>
    <property type="match status" value="1"/>
</dbReference>
<dbReference type="InterPro" id="IPR029063">
    <property type="entry name" value="SAM-dependent_MTases_sf"/>
</dbReference>
<dbReference type="InterPro" id="IPR002905">
    <property type="entry name" value="Trm1"/>
</dbReference>
<dbReference type="InterPro" id="IPR022923">
    <property type="entry name" value="TRM1_arc_bac"/>
</dbReference>
<dbReference type="InterPro" id="IPR042296">
    <property type="entry name" value="tRNA_met_Trm1_C"/>
</dbReference>
<dbReference type="NCBIfam" id="NF003331">
    <property type="entry name" value="PRK04338.1-7"/>
    <property type="match status" value="1"/>
</dbReference>
<dbReference type="NCBIfam" id="TIGR00308">
    <property type="entry name" value="TRM1"/>
    <property type="match status" value="1"/>
</dbReference>
<dbReference type="PANTHER" id="PTHR10631">
    <property type="entry name" value="N 2 ,N 2 -DIMETHYLGUANOSINE TRNA METHYLTRANSFERASE"/>
    <property type="match status" value="1"/>
</dbReference>
<dbReference type="PANTHER" id="PTHR10631:SF3">
    <property type="entry name" value="TRNA (GUANINE(26)-N(2))-DIMETHYLTRANSFERASE"/>
    <property type="match status" value="1"/>
</dbReference>
<dbReference type="Pfam" id="PF02005">
    <property type="entry name" value="TRM"/>
    <property type="match status" value="1"/>
</dbReference>
<dbReference type="SUPFAM" id="SSF53335">
    <property type="entry name" value="S-adenosyl-L-methionine-dependent methyltransferases"/>
    <property type="match status" value="1"/>
</dbReference>
<dbReference type="PROSITE" id="PS51626">
    <property type="entry name" value="SAM_MT_TRM1"/>
    <property type="match status" value="1"/>
</dbReference>
<feature type="chain" id="PRO_1000204867" description="tRNA (guanine(26)-N(2))-dimethyltransferase">
    <location>
        <begin position="1"/>
        <end position="378"/>
    </location>
</feature>
<feature type="domain" description="Trm1 methyltransferase" evidence="1">
    <location>
        <begin position="4"/>
        <end position="374"/>
    </location>
</feature>
<feature type="binding site" evidence="1">
    <location>
        <position position="44"/>
    </location>
    <ligand>
        <name>S-adenosyl-L-methionine</name>
        <dbReference type="ChEBI" id="CHEBI:59789"/>
    </ligand>
</feature>
<feature type="binding site" evidence="1">
    <location>
        <position position="69"/>
    </location>
    <ligand>
        <name>S-adenosyl-L-methionine</name>
        <dbReference type="ChEBI" id="CHEBI:59789"/>
    </ligand>
</feature>
<feature type="binding site" evidence="1">
    <location>
        <position position="87"/>
    </location>
    <ligand>
        <name>S-adenosyl-L-methionine</name>
        <dbReference type="ChEBI" id="CHEBI:59789"/>
    </ligand>
</feature>
<feature type="binding site" evidence="1">
    <location>
        <position position="114"/>
    </location>
    <ligand>
        <name>S-adenosyl-L-methionine</name>
        <dbReference type="ChEBI" id="CHEBI:59789"/>
    </ligand>
</feature>
<feature type="binding site" evidence="1">
    <location>
        <position position="115"/>
    </location>
    <ligand>
        <name>S-adenosyl-L-methionine</name>
        <dbReference type="ChEBI" id="CHEBI:59789"/>
    </ligand>
</feature>
<feature type="binding site" evidence="1">
    <location>
        <position position="246"/>
    </location>
    <ligand>
        <name>Zn(2+)</name>
        <dbReference type="ChEBI" id="CHEBI:29105"/>
    </ligand>
</feature>
<feature type="binding site" evidence="1">
    <location>
        <position position="249"/>
    </location>
    <ligand>
        <name>Zn(2+)</name>
        <dbReference type="ChEBI" id="CHEBI:29105"/>
    </ligand>
</feature>
<feature type="binding site" evidence="1">
    <location>
        <position position="263"/>
    </location>
    <ligand>
        <name>Zn(2+)</name>
        <dbReference type="ChEBI" id="CHEBI:29105"/>
    </ligand>
</feature>
<feature type="binding site" evidence="1">
    <location>
        <position position="266"/>
    </location>
    <ligand>
        <name>Zn(2+)</name>
        <dbReference type="ChEBI" id="CHEBI:29105"/>
    </ligand>
</feature>
<sequence length="378" mass="42874">MKLKEVTEGKVRIFVPDPKEYMIEGKFDPSWAPVFYNPKMTFNRDLSVIVVSLLKPKIILDALSATGIRGIRYYVESWKSEQLILNDKNSTAASLIQINVKNNGIENAKIFNKDANALLYEIKSEYIDIDPFGSPVPFILSSINATIRNGIAAFTATDLSPLEGSSRTSCRRKYDAINYKLSSSKELGLRILIGKIIREAATLEKTVHPLFSFYADYYYRLFVIVESGARKADENINKNLKYFGECPRCGFQTFVDENCKTKCPICGENFIIIGPLYIGPLHNMEFLKRMIDTYSDFNYLSSFNRIQKLLNVIEKEAKYKSVFYNISKLASKLKVSAIPPIDSILECLGDASKTHFAPTGIRTDKGYEEIIRCVKSLR</sequence>
<evidence type="ECO:0000255" key="1">
    <source>
        <dbReference type="HAMAP-Rule" id="MF_00290"/>
    </source>
</evidence>
<protein>
    <recommendedName>
        <fullName evidence="1">tRNA (guanine(26)-N(2))-dimethyltransferase</fullName>
        <ecNumber evidence="1">2.1.1.216</ecNumber>
    </recommendedName>
    <alternativeName>
        <fullName evidence="1">tRNA 2,2-dimethylguanosine-26 methyltransferase</fullName>
    </alternativeName>
    <alternativeName>
        <fullName evidence="1">tRNA(guanine-26,N(2)-N(2)) methyltransferase</fullName>
    </alternativeName>
    <alternativeName>
        <fullName evidence="1">tRNA(m(2,2)G26)dimethyltransferase</fullName>
    </alternativeName>
</protein>
<gene>
    <name evidence="1" type="primary">trm1</name>
    <name type="ordered locus">M1627_1333</name>
</gene>
<reference key="1">
    <citation type="journal article" date="2009" name="Proc. Natl. Acad. Sci. U.S.A.">
        <title>Biogeography of the Sulfolobus islandicus pan-genome.</title>
        <authorList>
            <person name="Reno M.L."/>
            <person name="Held N.L."/>
            <person name="Fields C.J."/>
            <person name="Burke P.V."/>
            <person name="Whitaker R.J."/>
        </authorList>
    </citation>
    <scope>NUCLEOTIDE SEQUENCE [LARGE SCALE GENOMIC DNA]</scope>
    <source>
        <strain>M.16.27</strain>
    </source>
</reference>
<proteinExistence type="inferred from homology"/>
<keyword id="KW-0479">Metal-binding</keyword>
<keyword id="KW-0489">Methyltransferase</keyword>
<keyword id="KW-0694">RNA-binding</keyword>
<keyword id="KW-0949">S-adenosyl-L-methionine</keyword>
<keyword id="KW-0808">Transferase</keyword>
<keyword id="KW-0819">tRNA processing</keyword>
<keyword id="KW-0820">tRNA-binding</keyword>
<keyword id="KW-0862">Zinc</keyword>
<accession>C3N5E1</accession>